<proteinExistence type="evidence at transcript level"/>
<protein>
    <recommendedName>
        <fullName>DNA-3-methyladenine glycosylase</fullName>
        <ecNumber>3.2.2.21</ecNumber>
    </recommendedName>
    <alternativeName>
        <fullName>3-alkyladenine DNA glycosylase</fullName>
    </alternativeName>
    <alternativeName>
        <fullName>3-methyladenine DNA glycosidase</fullName>
    </alternativeName>
    <alternativeName>
        <fullName>ADPG</fullName>
    </alternativeName>
    <alternativeName>
        <fullName>N-methylpurine-DNA glycosylase</fullName>
    </alternativeName>
</protein>
<organism>
    <name type="scientific">Rattus norvegicus</name>
    <name type="common">Rat</name>
    <dbReference type="NCBI Taxonomy" id="10116"/>
    <lineage>
        <taxon>Eukaryota</taxon>
        <taxon>Metazoa</taxon>
        <taxon>Chordata</taxon>
        <taxon>Craniata</taxon>
        <taxon>Vertebrata</taxon>
        <taxon>Euteleostomi</taxon>
        <taxon>Mammalia</taxon>
        <taxon>Eutheria</taxon>
        <taxon>Euarchontoglires</taxon>
        <taxon>Glires</taxon>
        <taxon>Rodentia</taxon>
        <taxon>Myomorpha</taxon>
        <taxon>Muroidea</taxon>
        <taxon>Muridae</taxon>
        <taxon>Murinae</taxon>
        <taxon>Rattus</taxon>
    </lineage>
</organism>
<sequence length="317" mass="34814">SKEPVSVVLPDAEHPAFPGRTRRPGNARAGSQVTGSREVGQMPAPLSRKIGQKKQQLAQSEQQQTPKEKLSSTPGLLRSIYFSSPEDRPARLGPEYFDQPAVTLARAFLGQVLVRRLADGTELRGRIVETEAYLGPEDEAAHSRGGRQTPRNRGMFMKPGTLYVYLIYGMYFCLNVSSQGAGACVLLRALEPLEGLETMRQLRNSLRKSTVGRSLKDRELCNGPSKLCQALARSKSFDQRDLAQDEAVWLEHGPLESSSPAVVAAAAGIGHAGEWTQKPLRFYVQGSPWVSVVDRVAEQMYQPQQTACSDXALIVQK</sequence>
<keyword id="KW-0963">Cytoplasm</keyword>
<keyword id="KW-0227">DNA damage</keyword>
<keyword id="KW-0234">DNA repair</keyword>
<keyword id="KW-0378">Hydrolase</keyword>
<keyword id="KW-0496">Mitochondrion</keyword>
<keyword id="KW-1135">Mitochondrion nucleoid</keyword>
<keyword id="KW-0539">Nucleus</keyword>
<keyword id="KW-0597">Phosphoprotein</keyword>
<keyword id="KW-1185">Reference proteome</keyword>
<comment type="function">
    <text>Hydrolysis of the deoxyribose N-glycosidic bond to excise 3-methyladenine, and 7-methylguanine from the damaged DNA polymer formed by alkylation lesions.</text>
</comment>
<comment type="catalytic activity">
    <reaction>
        <text>Hydrolysis of alkylated DNA, releasing 3-methyladenine, 3-methylguanine, 7-methylguanine and 7-methyladenine.</text>
        <dbReference type="EC" id="3.2.2.21"/>
    </reaction>
</comment>
<comment type="activity regulation">
    <text evidence="1">Binding to SSBP1 in mitochondria inhibits glycosylase activity in the context of a single-stranded DNA (ssDNA), but not a double-stranded DNA (dsDNA) substrates.</text>
</comment>
<comment type="subunit">
    <text evidence="1">Binds MBD1. Binds SSBP1.</text>
</comment>
<comment type="subcellular location">
    <subcellularLocation>
        <location evidence="1">Cytoplasm</location>
    </subcellularLocation>
    <subcellularLocation>
        <location evidence="1">Mitochondrion matrix</location>
        <location evidence="1">Mitochondrion nucleoid</location>
    </subcellularLocation>
    <subcellularLocation>
        <location evidence="1">Nucleus</location>
    </subcellularLocation>
</comment>
<comment type="similarity">
    <text evidence="4">Belongs to the DNA glycosylase MPG family.</text>
</comment>
<comment type="sequence caution" evidence="4">
    <conflict type="frameshift">
        <sequence resource="EMBL-CDS" id="CAA39814"/>
    </conflict>
</comment>
<reference key="1">
    <citation type="journal article" date="1990" name="EMBO J.">
        <title>Isolation and structure of a cDNA expressing a mammalian 3-methyladenine-DNA glycosylase.</title>
        <authorList>
            <person name="O'Connor T.R."/>
            <person name="Laval F."/>
        </authorList>
    </citation>
    <scope>NUCLEOTIDE SEQUENCE [MRNA]</scope>
</reference>
<gene>
    <name type="primary">Mpg</name>
</gene>
<evidence type="ECO:0000250" key="1"/>
<evidence type="ECO:0000250" key="2">
    <source>
        <dbReference type="UniProtKB" id="P29372"/>
    </source>
</evidence>
<evidence type="ECO:0000256" key="3">
    <source>
        <dbReference type="SAM" id="MobiDB-lite"/>
    </source>
</evidence>
<evidence type="ECO:0000305" key="4"/>
<feature type="chain" id="PRO_0000100067" description="DNA-3-methyladenine glycosylase">
    <location>
        <begin position="1" status="less than"/>
        <end position="317"/>
    </location>
</feature>
<feature type="region of interest" description="Disordered" evidence="3">
    <location>
        <begin position="1"/>
        <end position="76"/>
    </location>
</feature>
<feature type="compositionally biased region" description="Low complexity" evidence="3">
    <location>
        <begin position="53"/>
        <end position="64"/>
    </location>
</feature>
<feature type="modified residue" description="Phosphoserine" evidence="2">
    <location>
        <position position="84"/>
    </location>
</feature>
<feature type="modified residue" description="Phosphoserine" evidence="2">
    <location>
        <position position="258"/>
    </location>
</feature>
<feature type="non-terminal residue">
    <location>
        <position position="1"/>
    </location>
</feature>
<dbReference type="EC" id="3.2.2.21"/>
<dbReference type="EMBL" id="X56420">
    <property type="protein sequence ID" value="CAA39814.1"/>
    <property type="status" value="ALT_FRAME"/>
    <property type="molecule type" value="mRNA"/>
</dbReference>
<dbReference type="PIR" id="S12059">
    <property type="entry name" value="S12059"/>
</dbReference>
<dbReference type="FunCoup" id="P23571">
    <property type="interactions" value="143"/>
</dbReference>
<dbReference type="STRING" id="10116.ENSRNOP00000027940"/>
<dbReference type="PhosphoSitePlus" id="P23571"/>
<dbReference type="PaxDb" id="10116-ENSRNOP00000027940"/>
<dbReference type="UCSC" id="RGD:3106">
    <property type="organism name" value="rat"/>
</dbReference>
<dbReference type="AGR" id="RGD:3106"/>
<dbReference type="RGD" id="3106">
    <property type="gene designation" value="Mpg"/>
</dbReference>
<dbReference type="eggNOG" id="KOG4486">
    <property type="taxonomic scope" value="Eukaryota"/>
</dbReference>
<dbReference type="InParanoid" id="P23571"/>
<dbReference type="Reactome" id="R-RNO-110331">
    <property type="pathway name" value="Cleavage of the damaged purine"/>
</dbReference>
<dbReference type="Reactome" id="R-RNO-110357">
    <property type="pathway name" value="Displacement of DNA glycosylase by APEX1"/>
</dbReference>
<dbReference type="Proteomes" id="UP000002494">
    <property type="component" value="Unplaced"/>
</dbReference>
<dbReference type="GO" id="GO:0042645">
    <property type="term" value="C:mitochondrial nucleoid"/>
    <property type="evidence" value="ECO:0007669"/>
    <property type="project" value="UniProtKB-SubCell"/>
</dbReference>
<dbReference type="GO" id="GO:0005634">
    <property type="term" value="C:nucleus"/>
    <property type="evidence" value="ECO:0007669"/>
    <property type="project" value="UniProtKB-SubCell"/>
</dbReference>
<dbReference type="GO" id="GO:0003905">
    <property type="term" value="F:alkylbase DNA N-glycosylase activity"/>
    <property type="evidence" value="ECO:0000266"/>
    <property type="project" value="RGD"/>
</dbReference>
<dbReference type="GO" id="GO:0003677">
    <property type="term" value="F:DNA binding"/>
    <property type="evidence" value="ECO:0000266"/>
    <property type="project" value="RGD"/>
</dbReference>
<dbReference type="GO" id="GO:0006284">
    <property type="term" value="P:base-excision repair"/>
    <property type="evidence" value="ECO:0000266"/>
    <property type="project" value="RGD"/>
</dbReference>
<dbReference type="CDD" id="cd00540">
    <property type="entry name" value="AAG"/>
    <property type="match status" value="1"/>
</dbReference>
<dbReference type="FunFam" id="3.10.300.10:FF:000001">
    <property type="entry name" value="Putative 3-methyladenine DNA glycosylase"/>
    <property type="match status" value="1"/>
</dbReference>
<dbReference type="Gene3D" id="3.10.300.10">
    <property type="entry name" value="Methylpurine-DNA glycosylase (MPG)"/>
    <property type="match status" value="1"/>
</dbReference>
<dbReference type="HAMAP" id="MF_00527">
    <property type="entry name" value="3MGH"/>
    <property type="match status" value="1"/>
</dbReference>
<dbReference type="InterPro" id="IPR011034">
    <property type="entry name" value="Formyl_transferase-like_C_sf"/>
</dbReference>
<dbReference type="InterPro" id="IPR003180">
    <property type="entry name" value="MPG"/>
</dbReference>
<dbReference type="InterPro" id="IPR036995">
    <property type="entry name" value="MPG_sf"/>
</dbReference>
<dbReference type="NCBIfam" id="TIGR00567">
    <property type="entry name" value="3mg"/>
    <property type="match status" value="1"/>
</dbReference>
<dbReference type="PANTHER" id="PTHR10429">
    <property type="entry name" value="DNA-3-METHYLADENINE GLYCOSYLASE"/>
    <property type="match status" value="1"/>
</dbReference>
<dbReference type="PANTHER" id="PTHR10429:SF0">
    <property type="entry name" value="DNA-3-METHYLADENINE GLYCOSYLASE"/>
    <property type="match status" value="1"/>
</dbReference>
<dbReference type="Pfam" id="PF02245">
    <property type="entry name" value="Pur_DNA_glyco"/>
    <property type="match status" value="1"/>
</dbReference>
<dbReference type="SUPFAM" id="SSF50486">
    <property type="entry name" value="FMT C-terminal domain-like"/>
    <property type="match status" value="1"/>
</dbReference>
<name>3MG_RAT</name>
<accession>P23571</accession>